<feature type="chain" id="PRO_0000372509" description="D-tagatose-1,6-bisphosphate aldolase subunit GatZ">
    <location>
        <begin position="1"/>
        <end position="423"/>
    </location>
</feature>
<dbReference type="EMBL" id="CP001144">
    <property type="protein sequence ID" value="ACH75925.1"/>
    <property type="molecule type" value="Genomic_DNA"/>
</dbReference>
<dbReference type="RefSeq" id="WP_001675498.1">
    <property type="nucleotide sequence ID" value="NC_011205.1"/>
</dbReference>
<dbReference type="SMR" id="B5FHY5"/>
<dbReference type="KEGG" id="sed:SeD_A3612"/>
<dbReference type="HOGENOM" id="CLU_053334_0_0_6"/>
<dbReference type="UniPathway" id="UPA00704">
    <property type="reaction ID" value="UER00716"/>
</dbReference>
<dbReference type="Proteomes" id="UP000008322">
    <property type="component" value="Chromosome"/>
</dbReference>
<dbReference type="GO" id="GO:0005886">
    <property type="term" value="C:plasma membrane"/>
    <property type="evidence" value="ECO:0007669"/>
    <property type="project" value="TreeGrafter"/>
</dbReference>
<dbReference type="GO" id="GO:2001059">
    <property type="term" value="P:D-tagatose 6-phosphate catabolic process"/>
    <property type="evidence" value="ECO:0007669"/>
    <property type="project" value="UniProtKB-UniRule"/>
</dbReference>
<dbReference type="GO" id="GO:0019402">
    <property type="term" value="P:galactitol metabolic process"/>
    <property type="evidence" value="ECO:0007669"/>
    <property type="project" value="UniProtKB-KW"/>
</dbReference>
<dbReference type="GO" id="GO:0009401">
    <property type="term" value="P:phosphoenolpyruvate-dependent sugar phosphotransferase system"/>
    <property type="evidence" value="ECO:0007669"/>
    <property type="project" value="TreeGrafter"/>
</dbReference>
<dbReference type="FunFam" id="1.10.400.20:FF:000001">
    <property type="entry name" value="D-tagatose-1,6-bisphosphate aldolase subunit GatZ"/>
    <property type="match status" value="1"/>
</dbReference>
<dbReference type="FunFam" id="3.20.20.70:FF:000141">
    <property type="entry name" value="D-tagatose-1,6-bisphosphate aldolase subunit GatZ"/>
    <property type="match status" value="1"/>
</dbReference>
<dbReference type="Gene3D" id="3.20.20.70">
    <property type="entry name" value="Aldolase class I"/>
    <property type="match status" value="1"/>
</dbReference>
<dbReference type="Gene3D" id="1.10.400.20">
    <property type="entry name" value="putative tagatose 6-phosphate kinase domain like"/>
    <property type="match status" value="1"/>
</dbReference>
<dbReference type="HAMAP" id="MF_01296">
    <property type="entry name" value="Tagatose_aldol_GatZ"/>
    <property type="match status" value="1"/>
</dbReference>
<dbReference type="InterPro" id="IPR013785">
    <property type="entry name" value="Aldolase_TIM"/>
</dbReference>
<dbReference type="InterPro" id="IPR012062">
    <property type="entry name" value="GatZ/KbaZ-like"/>
</dbReference>
<dbReference type="InterPro" id="IPR050303">
    <property type="entry name" value="GatZ_KbaZ_carbometab"/>
</dbReference>
<dbReference type="InterPro" id="IPR023436">
    <property type="entry name" value="TagBP_ald_GatZ"/>
</dbReference>
<dbReference type="NCBIfam" id="TIGR02810">
    <property type="entry name" value="agaZ_gatZ"/>
    <property type="match status" value="1"/>
</dbReference>
<dbReference type="NCBIfam" id="NF011626">
    <property type="entry name" value="PRK15052.1"/>
    <property type="match status" value="1"/>
</dbReference>
<dbReference type="PANTHER" id="PTHR32502:SF12">
    <property type="entry name" value="D-TAGATOSE-1,6-BISPHOSPHATE ALDOLASE SUBUNIT GATZ"/>
    <property type="match status" value="1"/>
</dbReference>
<dbReference type="PANTHER" id="PTHR32502">
    <property type="entry name" value="N-ACETYLGALACTOSAMINE PERMEASE II COMPONENT-RELATED"/>
    <property type="match status" value="1"/>
</dbReference>
<dbReference type="Pfam" id="PF08013">
    <property type="entry name" value="GatZ_KbaZ-like"/>
    <property type="match status" value="1"/>
</dbReference>
<dbReference type="PIRSF" id="PIRSF009264">
    <property type="entry name" value="TagBP_ald_AgaZ"/>
    <property type="match status" value="1"/>
</dbReference>
<dbReference type="SUPFAM" id="SSF51569">
    <property type="entry name" value="Aldolase"/>
    <property type="match status" value="1"/>
</dbReference>
<proteinExistence type="inferred from homology"/>
<keyword id="KW-0298">Galactitol metabolism</keyword>
<comment type="function">
    <text evidence="1">Component of the tagatose-1,6-bisphosphate aldolase GatYZ that is required for full activity and stability of the Y subunit. Could have a chaperone-like function for the proper and stable folding of GatY. When expressed alone, GatZ does not show any aldolase activity. Is involved in the catabolism of galactitol.</text>
</comment>
<comment type="pathway">
    <text evidence="1">Carbohydrate metabolism; D-tagatose 6-phosphate degradation; D-glyceraldehyde 3-phosphate and glycerone phosphate from D-tagatose 6-phosphate: step 2/2.</text>
</comment>
<comment type="subunit">
    <text evidence="1">Forms a complex with GatY.</text>
</comment>
<comment type="similarity">
    <text evidence="1">Belongs to the GatZ/KbaZ family. GatZ subfamily.</text>
</comment>
<accession>B5FHY5</accession>
<reference key="1">
    <citation type="journal article" date="2011" name="J. Bacteriol.">
        <title>Comparative genomics of 28 Salmonella enterica isolates: evidence for CRISPR-mediated adaptive sublineage evolution.</title>
        <authorList>
            <person name="Fricke W.F."/>
            <person name="Mammel M.K."/>
            <person name="McDermott P.F."/>
            <person name="Tartera C."/>
            <person name="White D.G."/>
            <person name="Leclerc J.E."/>
            <person name="Ravel J."/>
            <person name="Cebula T.A."/>
        </authorList>
    </citation>
    <scope>NUCLEOTIDE SEQUENCE [LARGE SCALE GENOMIC DNA]</scope>
    <source>
        <strain>CT_02021853</strain>
    </source>
</reference>
<sequence>MKEIISRHKAGEQIGICSVCSAHPLVIESALRFDLNSGNKVLIEATSNQVNQFGGYTGMKPADFRDFVYGIAQEVGFPRERLILGGDHLGPNCWQNEPADTAMEKSVELIKAYVAAGFSKIHLDASMSCADDPTPLDPMVVAKRAALLCQAAETTATDEQKRHLTYVIGTEVPVPGGEASAINAVHVTREQDAARTLQTHQAAFRALGLDEALNRVIAIVVQPGVEFDHTQIIHYQPQAAKALSNWIKETPMVYEAHSTDYQTRQAYRALVRDHYAILKVGPALTFALREAIFALAQMENELISPEQRSRVLEVIDEVMLNEPGYWKKYYRPTWSQAMVDIHFSLSDRIRYYWPHPRIRQSVEKLIANLNNVTLPLGLISQFMPVQFERLSEGVLTPTPHNLIIDKIQDVLRAYRFGCTPDVA</sequence>
<evidence type="ECO:0000255" key="1">
    <source>
        <dbReference type="HAMAP-Rule" id="MF_01296"/>
    </source>
</evidence>
<name>GATZ_SALDC</name>
<organism>
    <name type="scientific">Salmonella dublin (strain CT_02021853)</name>
    <dbReference type="NCBI Taxonomy" id="439851"/>
    <lineage>
        <taxon>Bacteria</taxon>
        <taxon>Pseudomonadati</taxon>
        <taxon>Pseudomonadota</taxon>
        <taxon>Gammaproteobacteria</taxon>
        <taxon>Enterobacterales</taxon>
        <taxon>Enterobacteriaceae</taxon>
        <taxon>Salmonella</taxon>
    </lineage>
</organism>
<protein>
    <recommendedName>
        <fullName evidence="1">D-tagatose-1,6-bisphosphate aldolase subunit GatZ</fullName>
    </recommendedName>
</protein>
<gene>
    <name evidence="1" type="primary">gatZ</name>
    <name type="ordered locus">SeD_A3612</name>
</gene>